<accession>C1F425</accession>
<keyword id="KW-0456">Lyase</keyword>
<keyword id="KW-1185">Reference proteome</keyword>
<evidence type="ECO:0000255" key="1">
    <source>
        <dbReference type="HAMAP-Rule" id="MF_00434"/>
    </source>
</evidence>
<name>PHS_ACIC5</name>
<reference key="1">
    <citation type="journal article" date="2009" name="Appl. Environ. Microbiol.">
        <title>Three genomes from the phylum Acidobacteria provide insight into the lifestyles of these microorganisms in soils.</title>
        <authorList>
            <person name="Ward N.L."/>
            <person name="Challacombe J.F."/>
            <person name="Janssen P.H."/>
            <person name="Henrissat B."/>
            <person name="Coutinho P.M."/>
            <person name="Wu M."/>
            <person name="Xie G."/>
            <person name="Haft D.H."/>
            <person name="Sait M."/>
            <person name="Badger J."/>
            <person name="Barabote R.D."/>
            <person name="Bradley B."/>
            <person name="Brettin T.S."/>
            <person name="Brinkac L.M."/>
            <person name="Bruce D."/>
            <person name="Creasy T."/>
            <person name="Daugherty S.C."/>
            <person name="Davidsen T.M."/>
            <person name="DeBoy R.T."/>
            <person name="Detter J.C."/>
            <person name="Dodson R.J."/>
            <person name="Durkin A.S."/>
            <person name="Ganapathy A."/>
            <person name="Gwinn-Giglio M."/>
            <person name="Han C.S."/>
            <person name="Khouri H."/>
            <person name="Kiss H."/>
            <person name="Kothari S.P."/>
            <person name="Madupu R."/>
            <person name="Nelson K.E."/>
            <person name="Nelson W.C."/>
            <person name="Paulsen I."/>
            <person name="Penn K."/>
            <person name="Ren Q."/>
            <person name="Rosovitz M.J."/>
            <person name="Selengut J.D."/>
            <person name="Shrivastava S."/>
            <person name="Sullivan S.A."/>
            <person name="Tapia R."/>
            <person name="Thompson L.S."/>
            <person name="Watkins K.L."/>
            <person name="Yang Q."/>
            <person name="Yu C."/>
            <person name="Zafar N."/>
            <person name="Zhou L."/>
            <person name="Kuske C.R."/>
        </authorList>
    </citation>
    <scope>NUCLEOTIDE SEQUENCE [LARGE SCALE GENOMIC DNA]</scope>
    <source>
        <strain>ATCC 51196 / DSM 11244 / BCRC 80197 / JCM 7670 / NBRC 15755 / NCIMB 13165 / 161</strain>
    </source>
</reference>
<proteinExistence type="inferred from homology"/>
<protein>
    <recommendedName>
        <fullName evidence="1">Putative pterin-4-alpha-carbinolamine dehydratase</fullName>
        <shortName evidence="1">PHS</shortName>
        <ecNumber evidence="1">4.2.1.96</ecNumber>
    </recommendedName>
    <alternativeName>
        <fullName evidence="1">4-alpha-hydroxy-tetrahydropterin dehydratase</fullName>
    </alternativeName>
    <alternativeName>
        <fullName evidence="1">Pterin carbinolamine dehydratase</fullName>
        <shortName evidence="1">PCD</shortName>
    </alternativeName>
</protein>
<feature type="chain" id="PRO_1000134942" description="Putative pterin-4-alpha-carbinolamine dehydratase">
    <location>
        <begin position="1"/>
        <end position="92"/>
    </location>
</feature>
<dbReference type="EC" id="4.2.1.96" evidence="1"/>
<dbReference type="EMBL" id="CP001472">
    <property type="protein sequence ID" value="ACO34667.1"/>
    <property type="molecule type" value="Genomic_DNA"/>
</dbReference>
<dbReference type="RefSeq" id="WP_015896211.1">
    <property type="nucleotide sequence ID" value="NC_012483.1"/>
</dbReference>
<dbReference type="SMR" id="C1F425"/>
<dbReference type="STRING" id="240015.ACP_1052"/>
<dbReference type="KEGG" id="aca:ACP_1052"/>
<dbReference type="eggNOG" id="COG2154">
    <property type="taxonomic scope" value="Bacteria"/>
</dbReference>
<dbReference type="HOGENOM" id="CLU_081974_4_0_0"/>
<dbReference type="InParanoid" id="C1F425"/>
<dbReference type="OrthoDB" id="9800108at2"/>
<dbReference type="Proteomes" id="UP000002207">
    <property type="component" value="Chromosome"/>
</dbReference>
<dbReference type="GO" id="GO:0008124">
    <property type="term" value="F:4-alpha-hydroxytetrahydrobiopterin dehydratase activity"/>
    <property type="evidence" value="ECO:0007669"/>
    <property type="project" value="UniProtKB-UniRule"/>
</dbReference>
<dbReference type="GO" id="GO:0006729">
    <property type="term" value="P:tetrahydrobiopterin biosynthetic process"/>
    <property type="evidence" value="ECO:0007669"/>
    <property type="project" value="InterPro"/>
</dbReference>
<dbReference type="CDD" id="cd00488">
    <property type="entry name" value="PCD_DCoH"/>
    <property type="match status" value="1"/>
</dbReference>
<dbReference type="Gene3D" id="3.30.1360.20">
    <property type="entry name" value="Transcriptional coactivator/pterin dehydratase"/>
    <property type="match status" value="1"/>
</dbReference>
<dbReference type="HAMAP" id="MF_00434">
    <property type="entry name" value="Pterin_4_alpha"/>
    <property type="match status" value="1"/>
</dbReference>
<dbReference type="InterPro" id="IPR036428">
    <property type="entry name" value="PCD_sf"/>
</dbReference>
<dbReference type="InterPro" id="IPR001533">
    <property type="entry name" value="Pterin_deHydtase"/>
</dbReference>
<dbReference type="NCBIfam" id="NF002017">
    <property type="entry name" value="PRK00823.1-2"/>
    <property type="match status" value="1"/>
</dbReference>
<dbReference type="PANTHER" id="PTHR12599">
    <property type="entry name" value="PTERIN-4-ALPHA-CARBINOLAMINE DEHYDRATASE"/>
    <property type="match status" value="1"/>
</dbReference>
<dbReference type="PANTHER" id="PTHR12599:SF0">
    <property type="entry name" value="PTERIN-4-ALPHA-CARBINOLAMINE DEHYDRATASE"/>
    <property type="match status" value="1"/>
</dbReference>
<dbReference type="Pfam" id="PF01329">
    <property type="entry name" value="Pterin_4a"/>
    <property type="match status" value="1"/>
</dbReference>
<dbReference type="SUPFAM" id="SSF55248">
    <property type="entry name" value="PCD-like"/>
    <property type="match status" value="1"/>
</dbReference>
<sequence>MAQLTPKAIEERLSSLPAWKLQAPEIERVVEFSDFVAAMAFVNKVAEKAELAGHHPDIDIRYNRVRLALVTHDAGGLTERDFDLAASIEALL</sequence>
<organism>
    <name type="scientific">Acidobacterium capsulatum (strain ATCC 51196 / DSM 11244 / BCRC 80197 / JCM 7670 / NBRC 15755 / NCIMB 13165 / 161)</name>
    <dbReference type="NCBI Taxonomy" id="240015"/>
    <lineage>
        <taxon>Bacteria</taxon>
        <taxon>Pseudomonadati</taxon>
        <taxon>Acidobacteriota</taxon>
        <taxon>Terriglobia</taxon>
        <taxon>Terriglobales</taxon>
        <taxon>Acidobacteriaceae</taxon>
        <taxon>Acidobacterium</taxon>
    </lineage>
</organism>
<gene>
    <name type="ordered locus">ACP_1052</name>
</gene>
<comment type="catalytic activity">
    <reaction evidence="1">
        <text>(4aS,6R)-4a-hydroxy-L-erythro-5,6,7,8-tetrahydrobiopterin = (6R)-L-erythro-6,7-dihydrobiopterin + H2O</text>
        <dbReference type="Rhea" id="RHEA:11920"/>
        <dbReference type="ChEBI" id="CHEBI:15377"/>
        <dbReference type="ChEBI" id="CHEBI:15642"/>
        <dbReference type="ChEBI" id="CHEBI:43120"/>
        <dbReference type="EC" id="4.2.1.96"/>
    </reaction>
</comment>
<comment type="similarity">
    <text evidence="1">Belongs to the pterin-4-alpha-carbinolamine dehydratase family.</text>
</comment>